<organism>
    <name type="scientific">Mus musculus</name>
    <name type="common">Mouse</name>
    <dbReference type="NCBI Taxonomy" id="10090"/>
    <lineage>
        <taxon>Eukaryota</taxon>
        <taxon>Metazoa</taxon>
        <taxon>Chordata</taxon>
        <taxon>Craniata</taxon>
        <taxon>Vertebrata</taxon>
        <taxon>Euteleostomi</taxon>
        <taxon>Mammalia</taxon>
        <taxon>Eutheria</taxon>
        <taxon>Euarchontoglires</taxon>
        <taxon>Glires</taxon>
        <taxon>Rodentia</taxon>
        <taxon>Myomorpha</taxon>
        <taxon>Muroidea</taxon>
        <taxon>Muridae</taxon>
        <taxon>Murinae</taxon>
        <taxon>Mus</taxon>
        <taxon>Mus</taxon>
    </lineage>
</organism>
<protein>
    <recommendedName>
        <fullName>Histone H2AX</fullName>
        <shortName>H2a/x</shortName>
    </recommendedName>
    <alternativeName>
        <fullName>Histone H2A.X</fullName>
    </alternativeName>
</protein>
<gene>
    <name evidence="33" type="primary">H2ax</name>
    <name type="synonym">H2a.x</name>
    <name evidence="33" type="synonym">H2afx</name>
    <name type="synonym">Hist5-2ax</name>
</gene>
<reference key="1">
    <citation type="journal article" date="1991" name="Nucleic Acids Res.">
        <title>Polyadenylated and 3' processed mRNAs are transcribed from the mouse histone H2A.X gene.</title>
        <authorList>
            <person name="Nagata T."/>
            <person name="Kato T."/>
            <person name="Morita T."/>
            <person name="Nozaki M."/>
            <person name="Kubota H."/>
            <person name="Yagi H."/>
            <person name="Matsushiro A."/>
        </authorList>
    </citation>
    <scope>NUCLEOTIDE SEQUENCE [MRNA]</scope>
    <source>
        <strain>129/Sv</strain>
    </source>
</reference>
<reference key="2">
    <citation type="journal article" date="1995" name="Genomics">
        <title>Structure of the mouse H2A.X gene and physical linkage to the UPS locus on chromosome 9: assignment of the human H2A.X gene to 11q23 by sequence analysis.</title>
        <authorList>
            <person name="Porcher C."/>
            <person name="Grandchamp B."/>
        </authorList>
    </citation>
    <scope>NUCLEOTIDE SEQUENCE [GENOMIC DNA]</scope>
    <source>
        <strain>C3H/HeJ</strain>
        <tissue>Placenta</tissue>
    </source>
</reference>
<reference key="3">
    <citation type="journal article" date="2004" name="Genome Res.">
        <title>The status, quality, and expansion of the NIH full-length cDNA project: the Mammalian Gene Collection (MGC).</title>
        <authorList>
            <consortium name="The MGC Project Team"/>
        </authorList>
    </citation>
    <scope>NUCLEOTIDE SEQUENCE [LARGE SCALE MRNA]</scope>
    <source>
        <strain>C57BL/6J</strain>
        <tissue>Mammary gland</tissue>
    </source>
</reference>
<reference key="4">
    <citation type="journal article" date="1980" name="Biochemistry">
        <title>Histone 2A, a heteromorphous family of eight protein species.</title>
        <authorList>
            <person name="West M.H.P."/>
            <person name="Bonner W.M."/>
        </authorList>
    </citation>
    <scope>UBIQUITINATION</scope>
</reference>
<reference key="5">
    <citation type="journal article" date="1981" name="J. Biol. Chem.">
        <title>Quantitative determination of histone modification. H2A acetylation and phosphorylation.</title>
        <authorList>
            <person name="Pantazis P."/>
            <person name="Bonner W.M."/>
        </authorList>
    </citation>
    <scope>PHOSPHORYLATION AT SER-2</scope>
    <scope>ACETYLATION AT SER-2</scope>
</reference>
<reference key="6">
    <citation type="journal article" date="1998" name="J. Biol. Chem.">
        <title>DNA double-stranded breaks induce histone H2AX phosphorylation on serine 139.</title>
        <authorList>
            <person name="Rogakou E.P."/>
            <person name="Pilch D.R."/>
            <person name="Orr A.H."/>
            <person name="Ivanova V.S."/>
            <person name="Bonner W.M."/>
        </authorList>
    </citation>
    <scope>PHOSPHORYLATION AT SER-140</scope>
</reference>
<reference key="7">
    <citation type="journal article" date="2001" name="J. Biol. Chem.">
        <title>ATM phosphorylates histone H2AX in response to DNA double-strand breaks.</title>
        <authorList>
            <person name="Burma S."/>
            <person name="Chen B.P."/>
            <person name="Murphy M."/>
            <person name="Kurimasa A."/>
            <person name="Chen D.J."/>
        </authorList>
    </citation>
    <scope>SUBCELLULAR LOCATION</scope>
    <scope>PHOSPHORYLATION AT SER-140</scope>
</reference>
<reference key="8">
    <citation type="journal article" date="2001" name="Nature">
        <title>AID is required to initiate Nbs1/gamma-H2AX focus formation and mutations at sites of class switching.</title>
        <authorList>
            <person name="Petersen S."/>
            <person name="Casellas R."/>
            <person name="Reina-San-Martin B."/>
            <person name="Chen H.T."/>
            <person name="Difilippantonio M.J."/>
            <person name="Wilson P.C."/>
            <person name="Hanitsch L."/>
            <person name="Celeste A."/>
            <person name="Muramatsu M."/>
            <person name="Pilch D.R."/>
            <person name="Redon C."/>
            <person name="Ried T."/>
            <person name="Bonner W.M."/>
            <person name="Honjo T."/>
            <person name="Nussenzweig M.C."/>
            <person name="Nussenzweig A."/>
        </authorList>
    </citation>
    <scope>FUNCTION</scope>
    <scope>SUBCELLULAR LOCATION</scope>
    <scope>PHOSPHORYLATION AT SER-140</scope>
</reference>
<reference key="9">
    <citation type="journal article" date="2001" name="Nat. Genet.">
        <title>Recombinational DNA double-strand breaks in mice precede synapsis.</title>
        <authorList>
            <person name="Mahadevaiah S.K."/>
            <person name="Turner J.M.A."/>
            <person name="Baudat F."/>
            <person name="Rogakou E.P."/>
            <person name="de Boer P."/>
            <person name="Blanco-Rodriguez J."/>
            <person name="Jasin M."/>
            <person name="Keeney S."/>
            <person name="Bonner W.M."/>
            <person name="Burgoyne P.S."/>
        </authorList>
    </citation>
    <scope>SUBCELLULAR LOCATION</scope>
    <scope>PHOSPHORYLATION AT SER-140</scope>
    <scope>TISSUE SPECIFICITY</scope>
</reference>
<reference key="10">
    <citation type="journal article" date="2002" name="Nat. Cell Biol.">
        <title>DNA damage-induced G2-M checkpoint activation by histone H2AX and 53BP1.</title>
        <authorList>
            <person name="Fernandez-Capetillo O."/>
            <person name="Chen H.-T."/>
            <person name="Celeste A."/>
            <person name="Ward I."/>
            <person name="Romanienko P.J."/>
            <person name="Morales J.C."/>
            <person name="Naka K."/>
            <person name="Xia Z."/>
            <person name="Camerini-Otero R.D."/>
            <person name="Motoyama N."/>
            <person name="Carpenter P.B."/>
            <person name="Bonner W.M."/>
            <person name="Chen J."/>
            <person name="Nussenzweig A."/>
        </authorList>
    </citation>
    <scope>FUNCTION</scope>
    <scope>SUBCELLULAR LOCATION</scope>
    <scope>PHOSPHORYLATION AT SER-140</scope>
</reference>
<reference key="11">
    <citation type="journal article" date="2002" name="Proc. Natl. Acad. Sci. U.S.A.">
        <title>Increased ionizing radiation sensitivity and genomic instability in the absence of histone H2AX.</title>
        <authorList>
            <person name="Bassing C.H."/>
            <person name="Chua K.F."/>
            <person name="Sekiguchi J."/>
            <person name="Suh H."/>
            <person name="Whitlow S.R."/>
            <person name="Fleming J.C."/>
            <person name="Monroe B.C."/>
            <person name="Ciccone D.N."/>
            <person name="Yan C."/>
            <person name="Vlasakova K."/>
            <person name="Livingston D.M."/>
            <person name="Ferguson D.O."/>
            <person name="Scully R."/>
            <person name="Alt F.W."/>
        </authorList>
    </citation>
    <scope>FUNCTION</scope>
    <scope>SUBCELLULAR LOCATION</scope>
</reference>
<reference key="12">
    <citation type="journal article" date="2002" name="Science">
        <title>Genomic instability in mice lacking histone H2AX.</title>
        <authorList>
            <person name="Celeste A."/>
            <person name="Petersen S."/>
            <person name="Romanienko P.J."/>
            <person name="Fernandez-Capetillo O."/>
            <person name="Chen H.T."/>
            <person name="Sedelnikova O.A."/>
            <person name="Reina-San-Martin B."/>
            <person name="Coppola V."/>
            <person name="Meffre E."/>
            <person name="Difilippantonio M.J."/>
            <person name="Redon C."/>
            <person name="Pilch D.R."/>
            <person name="Olaru A."/>
            <person name="Eckhaus M."/>
            <person name="Camerini-Otero R.D."/>
            <person name="Tessarollo L."/>
            <person name="Livak F."/>
            <person name="Manova K."/>
            <person name="Bonner W.M."/>
            <person name="Nussenzweig M.C."/>
            <person name="Nussenzweig A."/>
        </authorList>
    </citation>
    <scope>FUNCTION</scope>
</reference>
<reference key="13">
    <citation type="journal article" date="2003" name="Cell">
        <title>Histone H2AX: a dosage-dependent suppressor of oncogenic translocations and tumors.</title>
        <authorList>
            <person name="Bassing C.H."/>
            <person name="Suh H."/>
            <person name="Ferguson D.O."/>
            <person name="Chua K.F."/>
            <person name="Manis J."/>
            <person name="Eckersdorff M."/>
            <person name="Gleason M."/>
            <person name="Bronson R."/>
            <person name="Lee C."/>
            <person name="Alt F.W."/>
        </authorList>
    </citation>
    <scope>FUNCTION</scope>
</reference>
<reference key="14">
    <citation type="journal article" date="2003" name="Cell">
        <title>H2AX haploinsufficiency modifies genomic stability and tumor susceptibility.</title>
        <authorList>
            <person name="Celeste A."/>
            <person name="Difilippantonio S."/>
            <person name="Difilippantonio M.J."/>
            <person name="Fernandez-Capetillo O."/>
            <person name="Pilch D.R."/>
            <person name="Sedelnikova O.A."/>
            <person name="Eckhaus M."/>
            <person name="Ried T."/>
            <person name="Bonner W.M."/>
            <person name="Nussenzweig A."/>
        </authorList>
    </citation>
    <scope>FUNCTION</scope>
    <scope>MUTAGENESIS OF SER-137 AND SER-140</scope>
</reference>
<reference key="15">
    <citation type="journal article" date="2003" name="Dev. Cell">
        <title>H2AX is required for chromatin remodeling and inactivation of sex chromosomes in male mouse meiosis.</title>
        <authorList>
            <person name="Fernandez-Capetillo O."/>
            <person name="Mahadevaiah S.K."/>
            <person name="Celeste A."/>
            <person name="Romanienko P.J."/>
            <person name="Camerini-Otero R.D."/>
            <person name="Bonner W.M."/>
            <person name="Manova K."/>
            <person name="Burgoyne P."/>
            <person name="Nussenzweig A."/>
        </authorList>
    </citation>
    <scope>FUNCTION</scope>
</reference>
<reference key="16">
    <citation type="journal article" date="2003" name="J. Biol. Chem.">
        <title>Accumulation of checkpoint protein 53BP1 at DNA breaks involves its binding to phosphorylated histone H2AX.</title>
        <authorList>
            <person name="Ward I.M."/>
            <person name="Minn K."/>
            <person name="Jorda K.G."/>
            <person name="Chen J."/>
        </authorList>
    </citation>
    <scope>INTERACTION WITH TP53BP1</scope>
</reference>
<reference key="17">
    <citation type="journal article" date="2003" name="J. Biol. Chem.">
        <title>Phosphorylation of histone H2AX and activation of Mre11, Rad50, and Nbs1 in response to replication-dependent DNA double-strand breaks induced by mammalian DNA topoisomerase I cleavage complexes.</title>
        <authorList>
            <person name="Furuta T."/>
            <person name="Takemura H."/>
            <person name="Liao Z.-Y."/>
            <person name="Aune G.J."/>
            <person name="Redon C."/>
            <person name="Sedelnikova O.A."/>
            <person name="Pilch D.R."/>
            <person name="Rogakou E.P."/>
            <person name="Celeste A."/>
            <person name="Chen H.T."/>
            <person name="Nussenzweig A."/>
            <person name="Aladjem M.I."/>
            <person name="Bonner W.M."/>
            <person name="Pommier Y."/>
        </authorList>
    </citation>
    <scope>FUNCTION</scope>
    <scope>PHOSPHORYLATION AT SER-140</scope>
</reference>
<reference key="18">
    <citation type="journal article" date="2003" name="J. Cell Biol.">
        <title>H2AX regulates meiotic telomere clustering.</title>
        <authorList>
            <person name="Fernandez-Capetillo O."/>
            <person name="Liebe B."/>
            <person name="Scherthan H."/>
            <person name="Nussenzweig A."/>
        </authorList>
    </citation>
    <scope>FUNCTION</scope>
    <scope>PHOSPHORYLATION AT SER-140</scope>
</reference>
<reference key="19">
    <citation type="journal article" date="2003" name="Nat. Cell Biol.">
        <title>Histone H2AX phosphorylation is dispensable for the initial recognition of DNA breaks.</title>
        <authorList>
            <person name="Celeste A."/>
            <person name="Fernandez-Capetillo O."/>
            <person name="Kruhlak M.J."/>
            <person name="Pilch D.R."/>
            <person name="Staudt D.W."/>
            <person name="Lee A."/>
            <person name="Bonner R.F."/>
            <person name="Bonner W.M."/>
            <person name="Nussenzweig A."/>
        </authorList>
    </citation>
    <scope>FUNCTION</scope>
</reference>
<reference key="20">
    <citation type="journal article" date="2004" name="Cancer Res.">
        <title>ATM and DNA-PK function redundantly to phosphorylate H2AX after exposure to ionizing radiation.</title>
        <authorList>
            <person name="Stiff T."/>
            <person name="O'Driscoll M."/>
            <person name="Rief N."/>
            <person name="Iwabuchi K."/>
            <person name="Loebrich M."/>
            <person name="Jeggo P.A."/>
        </authorList>
    </citation>
    <scope>SUBCELLULAR LOCATION</scope>
    <scope>PHOSPHORYLATION AT SER-140</scope>
</reference>
<reference key="21">
    <citation type="journal article" date="2004" name="Curr. Biol.">
        <title>BRCA1, histone H2AX phosphorylation, and male meiotic sex chromosome inactivation.</title>
        <authorList>
            <person name="Turner J.M.A."/>
            <person name="Aprelikova O."/>
            <person name="Xu X."/>
            <person name="Wang R."/>
            <person name="Kim S."/>
            <person name="Chandramouli G.V.R."/>
            <person name="Barrett J.C."/>
            <person name="Burgoyne P.S."/>
            <person name="Deng C.-X."/>
        </authorList>
    </citation>
    <scope>FUNCTION</scope>
    <scope>SUBCELLULAR LOCATION</scope>
</reference>
<reference key="22">
    <citation type="journal article" date="2004" name="Mol. Cell">
        <title>A pathway of double-strand break rejoining dependent upon ATM, Artemis, and proteins locating to gamma-H2AX foci.</title>
        <authorList>
            <person name="Riballo E."/>
            <person name="Kuehne M."/>
            <person name="Rief N."/>
            <person name="Doherty A."/>
            <person name="Smith G.C.M."/>
            <person name="Recio M.-J."/>
            <person name="Reis C."/>
            <person name="Dahm K."/>
            <person name="Fricke A."/>
            <person name="Krempler A."/>
            <person name="Parker A.R."/>
            <person name="Jackson S.P."/>
            <person name="Gennery A."/>
            <person name="Jeggo P.A."/>
            <person name="Loebrich M."/>
        </authorList>
    </citation>
    <scope>FUNCTION</scope>
</reference>
<reference key="23">
    <citation type="journal article" date="2004" name="Mol. Cell">
        <title>Control of sister chromatid recombination by histone H2AX.</title>
        <authorList>
            <person name="Xie A."/>
            <person name="Puget N."/>
            <person name="Shim I."/>
            <person name="Odate S."/>
            <person name="Jarzyna I."/>
            <person name="Bassing C.H."/>
            <person name="Alt F.W."/>
            <person name="Scully R."/>
        </authorList>
    </citation>
    <scope>FUNCTION</scope>
    <scope>MUTAGENESIS OF SER-140</scope>
</reference>
<reference key="24">
    <citation type="journal article" date="2005" name="Mol. Cell. Biol.">
        <title>Functional interaction of H2AX, NBS1, and p53 in ATM-dependent DNA damage responses and tumor suppression.</title>
        <authorList>
            <person name="Kang J."/>
            <person name="Ferguson D."/>
            <person name="Song H."/>
            <person name="Bassing C."/>
            <person name="Eckersdorff M."/>
            <person name="Alt F.W."/>
            <person name="Xu Y."/>
        </authorList>
    </citation>
    <scope>FUNCTION</scope>
</reference>
<reference key="25">
    <citation type="journal article" date="2005" name="Nat. Genet.">
        <title>Silencing of unsynapsed meiotic chromosomes in the mouse.</title>
        <authorList>
            <person name="Turner J.M.A."/>
            <person name="Mahadevaiah S.K."/>
            <person name="Fernandez-Capetillo O."/>
            <person name="Nussenzweig A."/>
            <person name="Xu X."/>
            <person name="Deng C.-X."/>
            <person name="Burgoyne P.S."/>
        </authorList>
    </citation>
    <scope>FUNCTION</scope>
    <scope>PHOSPHORYLATION AT SER-140</scope>
</reference>
<reference key="26">
    <citation type="journal article" date="2009" name="Nature">
        <title>WSTF regulates the H2A.X DNA damage response via a novel tyrosine kinase activity.</title>
        <authorList>
            <person name="Xiao A."/>
            <person name="Li H."/>
            <person name="Shechter D."/>
            <person name="Ahn S.H."/>
            <person name="Fabrizio L.A."/>
            <person name="Erdjument-Bromage H."/>
            <person name="Ishibe-Murakami S."/>
            <person name="Wang B."/>
            <person name="Tempst P."/>
            <person name="Hofmann K."/>
            <person name="Patel D.J."/>
            <person name="Elledge S.J."/>
            <person name="Allis C.D."/>
        </authorList>
    </citation>
    <scope>PHOSPHORYLATION AT TYR-143</scope>
</reference>
<reference key="27">
    <citation type="journal article" date="2010" name="Cell">
        <title>A tissue-specific atlas of mouse protein phosphorylation and expression.</title>
        <authorList>
            <person name="Huttlin E.L."/>
            <person name="Jedrychowski M.P."/>
            <person name="Elias J.E."/>
            <person name="Goswami T."/>
            <person name="Rad R."/>
            <person name="Beausoleil S.A."/>
            <person name="Villen J."/>
            <person name="Haas W."/>
            <person name="Sowa M.E."/>
            <person name="Gygi S.P."/>
        </authorList>
    </citation>
    <scope>PHOSPHORYLATION [LARGE SCALE ANALYSIS] AT SER-121; SER-122; SER-137 AND SER-140</scope>
    <scope>IDENTIFICATION BY MASS SPECTROMETRY [LARGE SCALE ANALYSIS]</scope>
    <source>
        <tissue>Testis</tissue>
    </source>
</reference>
<reference key="28">
    <citation type="journal article" date="2010" name="FEBS Lett.">
        <title>Acetylation of H2AX on lysine 36 plays a key role in the DNA double-strand break repair pathway.</title>
        <authorList>
            <person name="Jiang X."/>
            <person name="Xu Y."/>
            <person name="Price B.D."/>
        </authorList>
    </citation>
    <scope>ACETYLATION AT LYS-37</scope>
    <scope>MUTAGENESIS OF LYS-6; LYS-10; LYS-14; LYS-16; LYS-37; 119-LYS-LYS-120 AND SER-140</scope>
</reference>
<reference key="29">
    <citation type="journal article" date="2012" name="Genes Cells">
        <title>HORMAD2 is essential for synapsis surveillance during meiotic prophase via the recruitment of ATR activity.</title>
        <authorList>
            <person name="Kogo H."/>
            <person name="Tsutsumi M."/>
            <person name="Inagaki H."/>
            <person name="Ohye T."/>
            <person name="Kiyonari H."/>
            <person name="Kurahashi H."/>
        </authorList>
    </citation>
    <scope>SUBCELLULAR LOCATION</scope>
</reference>
<reference key="30">
    <citation type="journal article" date="2013" name="Mol. Cell">
        <title>SIRT5-mediated lysine desuccinylation impacts diverse metabolic pathways.</title>
        <authorList>
            <person name="Park J."/>
            <person name="Chen Y."/>
            <person name="Tishkoff D.X."/>
            <person name="Peng C."/>
            <person name="Tan M."/>
            <person name="Dai L."/>
            <person name="Xie Z."/>
            <person name="Zhang Y."/>
            <person name="Zwaans B.M."/>
            <person name="Skinner M.E."/>
            <person name="Lombard D.B."/>
            <person name="Zhao Y."/>
        </authorList>
    </citation>
    <scope>ACETYLATION [LARGE SCALE ANALYSIS] AT LYS-6 AND LYS-10</scope>
    <scope>IDENTIFICATION BY MASS SPECTROMETRY [LARGE SCALE ANALYSIS]</scope>
    <source>
        <tissue>Embryonic fibroblast</tissue>
    </source>
</reference>
<reference key="31">
    <citation type="journal article" date="2018" name="Commun. Biol.">
        <title>Evolutionarily-conserved MZIP2 is essential for crossover formation in mammalian meiosis.</title>
        <authorList>
            <person name="Zhang Q."/>
            <person name="Shao J."/>
            <person name="Fan H.Y."/>
            <person name="Yu C."/>
        </authorList>
    </citation>
    <scope>SUBCELLULAR LOCATION</scope>
</reference>
<reference key="32">
    <citation type="journal article" date="2019" name="Nucleic Acids Res.">
        <title>SCRE serves as a unique synaptonemal complex fastener and is essential for progression of meiosis prophase I in mice.</title>
        <authorList>
            <person name="Liu H."/>
            <person name="Huang T."/>
            <person name="Li M."/>
            <person name="Li M."/>
            <person name="Zhang C."/>
            <person name="Jiang J."/>
            <person name="Yu X."/>
            <person name="Yin Y."/>
            <person name="Zhang F."/>
            <person name="Lu G."/>
            <person name="Luo M.C."/>
            <person name="Zhang L.R."/>
            <person name="Li J."/>
            <person name="Liu K."/>
            <person name="Chen Z.J."/>
        </authorList>
    </citation>
    <scope>SUBCELLULAR LOCATION</scope>
</reference>
<reference key="33">
    <citation type="journal article" date="2019" name="Sci. Adv.">
        <title>SPO16 binds SHOC1 to promote homologous recombination and crossing-over in meiotic prophase I.</title>
        <authorList>
            <person name="Zhang Q."/>
            <person name="Ji S.Y."/>
            <person name="Busayavalasa K."/>
            <person name="Yu C."/>
        </authorList>
    </citation>
    <scope>SUBCELLULAR LOCATION</scope>
</reference>
<evidence type="ECO:0000250" key="1">
    <source>
        <dbReference type="UniProtKB" id="P0C0S5"/>
    </source>
</evidence>
<evidence type="ECO:0000250" key="2">
    <source>
        <dbReference type="UniProtKB" id="P16104"/>
    </source>
</evidence>
<evidence type="ECO:0000256" key="3">
    <source>
        <dbReference type="SAM" id="MobiDB-lite"/>
    </source>
</evidence>
<evidence type="ECO:0000269" key="4">
    <source>
    </source>
</evidence>
<evidence type="ECO:0000269" key="5">
    <source>
    </source>
</evidence>
<evidence type="ECO:0000269" key="6">
    <source>
    </source>
</evidence>
<evidence type="ECO:0000269" key="7">
    <source>
    </source>
</evidence>
<evidence type="ECO:0000269" key="8">
    <source>
    </source>
</evidence>
<evidence type="ECO:0000269" key="9">
    <source>
    </source>
</evidence>
<evidence type="ECO:0000269" key="10">
    <source>
    </source>
</evidence>
<evidence type="ECO:0000269" key="11">
    <source>
    </source>
</evidence>
<evidence type="ECO:0000269" key="12">
    <source>
    </source>
</evidence>
<evidence type="ECO:0000269" key="13">
    <source>
    </source>
</evidence>
<evidence type="ECO:0000269" key="14">
    <source>
    </source>
</evidence>
<evidence type="ECO:0000269" key="15">
    <source>
    </source>
</evidence>
<evidence type="ECO:0000269" key="16">
    <source>
    </source>
</evidence>
<evidence type="ECO:0000269" key="17">
    <source>
    </source>
</evidence>
<evidence type="ECO:0000269" key="18">
    <source>
    </source>
</evidence>
<evidence type="ECO:0000269" key="19">
    <source>
    </source>
</evidence>
<evidence type="ECO:0000269" key="20">
    <source>
    </source>
</evidence>
<evidence type="ECO:0000269" key="21">
    <source>
    </source>
</evidence>
<evidence type="ECO:0000269" key="22">
    <source>
    </source>
</evidence>
<evidence type="ECO:0000269" key="23">
    <source>
    </source>
</evidence>
<evidence type="ECO:0000269" key="24">
    <source>
    </source>
</evidence>
<evidence type="ECO:0000269" key="25">
    <source>
    </source>
</evidence>
<evidence type="ECO:0000269" key="26">
    <source>
    </source>
</evidence>
<evidence type="ECO:0000269" key="27">
    <source>
    </source>
</evidence>
<evidence type="ECO:0000269" key="28">
    <source>
    </source>
</evidence>
<evidence type="ECO:0000269" key="29">
    <source>
    </source>
</evidence>
<evidence type="ECO:0000269" key="30">
    <source>
    </source>
</evidence>
<evidence type="ECO:0000305" key="31"/>
<evidence type="ECO:0000305" key="32">
    <source>
    </source>
</evidence>
<evidence type="ECO:0000312" key="33">
    <source>
        <dbReference type="MGI" id="MGI:102688"/>
    </source>
</evidence>
<evidence type="ECO:0007744" key="34">
    <source>
    </source>
</evidence>
<evidence type="ECO:0007744" key="35">
    <source>
    </source>
</evidence>
<comment type="function">
    <text evidence="6 7 8 9 10 11 13 14 15 16 18 19 20 21 22">Variant histone H2A which replaces conventional H2A in a subset of nucleosomes. Nucleosomes wrap and compact DNA into chromatin, limiting DNA accessibility to the cellular machineries which require DNA as a template. Histones thereby play a central role in transcription regulation, DNA repair, DNA replication and chromosomal stability. DNA accessibility is regulated via a complex set of post-translational modifications of histones, also called histone code, and nucleosome remodeling. Required for checkpoint-mediated arrest of cell cycle progression in response to low doses of ionizing radiation and for efficient repair of DNA double strand breaks (DSBs) specifically when modified by C-terminal phosphorylation.</text>
</comment>
<comment type="subunit">
    <text evidence="2 12">The nucleosome is a histone octamer containing two molecules each of H2A, H2B, H3 and H4 assembled in one H3-H4 heterotetramer and two H2A-H2B heterodimers. The octamer wraps approximately 147 bp of DNA. Interacts with numerous proteins required for DNA damage signaling and repair when phosphorylated on Ser-140. These include MDC1, BRCA1 and the MRN complex, composed of MRE11, RAD50, and NBN. Interaction with the MRN complex is mediated at least in part by NBN. Also interacts with DHX9/NDHII when phosphorylated on Ser-140 and MCPH1 when phosphorylated at Ser-140 or Tyr-143. Interacts with ARRB2; the interaction is detected in the nucleus upon OR1D2 stimulation. Interacts with WRAP53/TCAB1 (By similarity). Interacts with TP53BP1 (PubMed:12697768). Interacts with HDGFL2 (By similarity).</text>
</comment>
<comment type="interaction">
    <interactant intactId="EBI-495621">
        <id>P27661</id>
    </interactant>
    <interactant intactId="EBI-773597">
        <id>Q9Z0X1</id>
        <label>Aifm1</label>
    </interactant>
    <organismsDiffer>false</organismsDiffer>
    <experiments>3</experiments>
</comment>
<comment type="interaction">
    <interactant intactId="EBI-495621">
        <id>P27661</id>
    </interactant>
    <interactant intactId="EBI-7268304">
        <id>Q80V62</id>
        <label>Fancd2</label>
    </interactant>
    <organismsDiffer>false</organismsDiffer>
    <experiments>2</experiments>
</comment>
<comment type="subcellular location">
    <subcellularLocation>
        <location evidence="4 5 6 8 9 20">Nucleus</location>
    </subcellularLocation>
    <subcellularLocation>
        <location evidence="4 5 8 17 20 25 26 27 28">Chromosome</location>
    </subcellularLocation>
</comment>
<comment type="tissue specificity">
    <text evidence="4">Most abundant in testis, thymus and spleen.</text>
</comment>
<comment type="developmental stage">
    <text>Synthesized in G1 as well as in S-phase.</text>
</comment>
<comment type="domain">
    <text>The [ST]-Q motif constitutes a recognition sequence for kinases from the PI3/PI4-kinase family.</text>
</comment>
<comment type="PTM">
    <text evidence="2 4 5 6 9 10 16 17 19 23 29 30">Phosphorylated on Ser-140 (to form gamma-H2AX or H2AX139ph) in response to DNA double strand breaks (DSBs) generated by exogenous genotoxic agents, by stalled replication forks, by meiotic recombination events and during immunoglobulin class switching in lymphocytes. Phosphorylation can extend up to several thousand nucleosomes from the actual site of the DSB and may mark the surrounding chromatin for recruitment of proteins required for DNA damage signaling and repair. Widespread phosphorylation may also serve to amplify the damage signal or aid repair of persistent lesions. Phosphorylation of Ser-140 (H2AX139ph) in response to ionizing radiation is mediated by both ATM and PRKDC while defects in DNA replication induce Ser-140 phosphorylation (H2AX139ph) subsequent to activation of ATR and PRKDC. Dephosphorylation of Ser-140 by PP2A is required for DNA DSB repair. In meiosis, Ser-140 phosphorylation (H2AX139ph) first occurs at synaptonemal complexes during leptotene and is an ATM-dependent response to the formation of programmed DSBs by SPO11. Ser-140 phosphorylation (H2AX139ph) subsequently occurs at unsynapsed regions of both autosomes and the XY bivalent during zygotene and is ATR- and BRCA1-dependent. Ser-140 phosphorylation (H2AX139ph) may also be required for transcriptional repression of unsynapsed chromatin and meiotic sex chromosome inactivation (MSCI), whereby the X and Y chromosomes condense in pachytene to form the heterochromatic XY-body. During immunoglobulin class switch recombination in lymphocytes, Ser-140 phosphorylation (H2AX139ph) at sites of DNA-recombination requires the activation-induced cytidine deaminase AICDA. Phosphorylation at Tyr-143 (H2AXY142ph) by BAZ1B/WSTF determines the relative recruitment of either DNA repair or pro-apoptotic factors. Phosphorylation at Tyr-143 (H2AXY142ph) favors the recruitment of APBB1/FE65 and pro-apoptosis factors such as MAPK8/JNK1, triggering apoptosis. In contrast, dephosphorylation of Tyr-143 by EYA proteins (EYA1, EYA2, EYA3 or EYA4) favors the recruitment of MDC1-containing DNA repair complexes to the tail of phosphorylated Ser-140 (H2AX139ph). Phosphorylated by VRK1 (By similarity).</text>
</comment>
<comment type="PTM">
    <text evidence="2">Monoubiquitination of Lys-120 (H2AXK119ub) by RING1 and RNF2/RING2 complex gives a specific tag for epigenetic transcriptional repression. Following DNA double-strand breaks (DSBs), it is ubiquitinated through 'Lys-63' linkage of ubiquitin moieties by the E2 ligase UBE2N and the E3 ligases RNF8 and RNF168, leading to the recruitment of repair proteins to sites of DNA damage. Ubiquitination at Lys-14 and Lys-16 (H2AK13Ub and H2AK15Ub, respectively) in response to DNA damage is initiated by RNF168 that mediates monoubiquitination at these 2 sites, and 'Lys-63'-linked ubiquitin are then conjugated to monoubiquitin; RNF8 is able to extend 'Lys-63'-linked ubiquitin chains in vitro. H2AK119Ub and ionizing radiation-induced 'Lys-63'-linked ubiquitination (H2AK13Ub and H2AK15Ub) are distinct events (By similarity).</text>
</comment>
<comment type="PTM">
    <text evidence="2 24 29">Acetylation at Lys-6 (H2AXK5ac) by KAT5 component of the NuA4 histone acetyltransferase complex promotes NBN/NBS1 assembly at the sites of DNA damage (By similarity). Acetylation at Lys-37 increases in S and G2 phases (PubMed:20488183, PubMed:7217105). This modification has been proposed to be important for DNA double-strand break repair (PubMed:20488183).</text>
</comment>
<comment type="miscellaneous">
    <text>Haploinsufficient for the suppression of genomic instability. This phenotype is further exacerbated in the absence of TP53.</text>
</comment>
<comment type="similarity">
    <text evidence="31">Belongs to the histone H2A family.</text>
</comment>
<sequence>MSGRGKTGGKARAKAKSRSSRAGLQFPVGRVHRLLRKGHYAERVGAGAPVYLAAVLEYLTAEILELAGNAARDNKKTRIIPRHLQLAIRNDEELNKLLGGVTIAQGGVLPNIQAVLLPKKSSATVGPKAPAVGKKASQASQEY</sequence>
<name>H2AX_MOUSE</name>
<accession>P27661</accession>
<feature type="initiator methionine" description="Removed" evidence="29">
    <location>
        <position position="1"/>
    </location>
</feature>
<feature type="chain" id="PRO_0000055243" description="Histone H2AX">
    <location>
        <begin position="2"/>
        <end position="143"/>
    </location>
</feature>
<feature type="region of interest" description="Disordered" evidence="3">
    <location>
        <begin position="1"/>
        <end position="22"/>
    </location>
</feature>
<feature type="region of interest" description="Disordered" evidence="3">
    <location>
        <begin position="121"/>
        <end position="143"/>
    </location>
</feature>
<feature type="short sequence motif" description="[ST]-Q motif">
    <location>
        <begin position="140"/>
        <end position="141"/>
    </location>
</feature>
<feature type="compositionally biased region" description="Basic residues" evidence="3">
    <location>
        <begin position="7"/>
        <end position="19"/>
    </location>
</feature>
<feature type="modified residue" description="N-acetylserine" evidence="29">
    <location>
        <position position="2"/>
    </location>
</feature>
<feature type="modified residue" description="Phosphoserine" evidence="29">
    <location>
        <position position="2"/>
    </location>
</feature>
<feature type="modified residue" description="N6-acetyllysine" evidence="35">
    <location>
        <position position="6"/>
    </location>
</feature>
<feature type="modified residue" description="N6-acetyllysine" evidence="35">
    <location>
        <position position="10"/>
    </location>
</feature>
<feature type="modified residue" description="N6-lactoyllysine; alternate" evidence="1">
    <location>
        <position position="10"/>
    </location>
</feature>
<feature type="modified residue" description="N6-acetyllysine; by CREBBP and EP300" evidence="24">
    <location>
        <position position="37"/>
    </location>
</feature>
<feature type="modified residue" description="Phosphoserine" evidence="34">
    <location>
        <position position="121"/>
    </location>
</feature>
<feature type="modified residue" description="Phosphoserine" evidence="34">
    <location>
        <position position="122"/>
    </location>
</feature>
<feature type="modified residue" description="Phosphoserine" evidence="34">
    <location>
        <position position="137"/>
    </location>
</feature>
<feature type="modified residue" description="Phosphoserine; by ATM, ATR and PRKDC" evidence="4 5 6 9 10 16 17 19 30 34">
    <location>
        <position position="140"/>
    </location>
</feature>
<feature type="modified residue" description="Phosphotyrosine; by WSTF" evidence="23">
    <location>
        <position position="143"/>
    </location>
</feature>
<feature type="cross-link" description="Glycyl lysine isopeptide (Lys-Gly) (interchain with G-Cter in ubiquitin)" evidence="2">
    <location>
        <position position="14"/>
    </location>
</feature>
<feature type="cross-link" description="Glycyl lysine isopeptide (Lys-Gly) (interchain with G-Cter in ubiquitin)" evidence="2">
    <location>
        <position position="16"/>
    </location>
</feature>
<feature type="cross-link" description="Glycyl lysine isopeptide (Lys-Gly) (interchain with G-Cter in ubiquitin)" evidence="32">
    <location>
        <position position="120"/>
    </location>
</feature>
<feature type="cross-link" description="Glycyl lysine isopeptide (Lys-Gly) (interchain with G-Cter in SUMO2)" evidence="2">
    <location>
        <position position="128"/>
    </location>
</feature>
<feature type="cross-link" description="Glycyl lysine isopeptide (Lys-Gly) (interchain with G-Cter in SUMO2)" evidence="2">
    <location>
        <position position="135"/>
    </location>
</feature>
<feature type="mutagenesis site" description="No effect on radiosensitivity; when associated with A-10, A-14 and A-16." evidence="24">
    <original>K</original>
    <variation>A</variation>
    <location>
        <position position="6"/>
    </location>
</feature>
<feature type="mutagenesis site" description="No effect on radiosensitivity; when associated with A-6, A-14 and A-16." evidence="24">
    <original>K</original>
    <variation>A</variation>
    <location>
        <position position="10"/>
    </location>
</feature>
<feature type="mutagenesis site" description="No effect on radiosensitivity; when associated with A-6, A-10 and A-16." evidence="24">
    <original>K</original>
    <variation>A</variation>
    <location>
        <position position="14"/>
    </location>
</feature>
<feature type="mutagenesis site" description="No effect on radiosensitivity; when associated with A-6, A-10 and A-14." evidence="24">
    <original>K</original>
    <variation>A</variation>
    <location>
        <position position="16"/>
    </location>
</feature>
<feature type="mutagenesis site" description="Increased radiosensitivity. No effect on phosphorylation after DNA damage. No effect on Ser-140 phosphorylation, nor on TP53BP1 recruitment to DNA double-strand breaks." evidence="24">
    <original>K</original>
    <variation>A</variation>
    <location>
        <position position="37"/>
    </location>
</feature>
<feature type="mutagenesis site" description="No effect on phosphorylation after DNA damage, but increased radiosensitivity. Further increase in radiosensitivity; when associated with A-140." evidence="24">
    <original>K</original>
    <variation>R</variation>
    <location>
        <position position="37"/>
    </location>
</feature>
<feature type="mutagenesis site" description="Complete loss of ubiquitination and increased radiosensitivity." evidence="24">
    <original>KK</original>
    <variation>AA</variation>
    <location>
        <begin position="119"/>
        <end position="120"/>
    </location>
</feature>
<feature type="mutagenesis site" description="Increased genomic instability and radiosensitivity; when associated with A-140." evidence="15">
    <original>S</original>
    <variation>A</variation>
    <location>
        <position position="137"/>
    </location>
</feature>
<feature type="mutagenesis site" description="Increased genomic instability and radiosensitivity; when associated with A-137. Reduced homologous recombination. No effect on Lys-40 acetylation. Further increase in radiosensitivity; when associated with R-37." evidence="15 21 24">
    <original>S</original>
    <variation>A</variation>
    <location>
        <position position="140"/>
    </location>
</feature>
<dbReference type="EMBL" id="X58069">
    <property type="protein sequence ID" value="CAA41099.1"/>
    <property type="molecule type" value="mRNA"/>
</dbReference>
<dbReference type="EMBL" id="Z35401">
    <property type="protein sequence ID" value="CAA84585.1"/>
    <property type="molecule type" value="Genomic_DNA"/>
</dbReference>
<dbReference type="EMBL" id="BC005468">
    <property type="protein sequence ID" value="AAH05468.1"/>
    <property type="molecule type" value="mRNA"/>
</dbReference>
<dbReference type="EMBL" id="BC010336">
    <property type="protein sequence ID" value="AAH10336.1"/>
    <property type="molecule type" value="mRNA"/>
</dbReference>
<dbReference type="CCDS" id="CCDS23105.1"/>
<dbReference type="PIR" id="I48406">
    <property type="entry name" value="I48406"/>
</dbReference>
<dbReference type="RefSeq" id="NP_034566.1">
    <property type="nucleotide sequence ID" value="NM_010436.2"/>
</dbReference>
<dbReference type="SMR" id="P27661"/>
<dbReference type="BioGRID" id="200313">
    <property type="interactions" value="23"/>
</dbReference>
<dbReference type="FunCoup" id="P27661">
    <property type="interactions" value="1386"/>
</dbReference>
<dbReference type="IntAct" id="P27661">
    <property type="interactions" value="12"/>
</dbReference>
<dbReference type="MINT" id="P27661"/>
<dbReference type="STRING" id="10090.ENSMUSP00000051432"/>
<dbReference type="GlyGen" id="P27661">
    <property type="glycosylation" value="1 site, 1 O-linked glycan (1 site)"/>
</dbReference>
<dbReference type="iPTMnet" id="P27661"/>
<dbReference type="PhosphoSitePlus" id="P27661"/>
<dbReference type="SwissPalm" id="P27661"/>
<dbReference type="jPOST" id="P27661"/>
<dbReference type="PaxDb" id="10090-ENSMUSP00000051432"/>
<dbReference type="PeptideAtlas" id="P27661"/>
<dbReference type="ProteomicsDB" id="271118"/>
<dbReference type="Pumba" id="P27661"/>
<dbReference type="TopDownProteomics" id="P27661"/>
<dbReference type="Antibodypedia" id="3220">
    <property type="antibodies" value="1591 antibodies from 47 providers"/>
</dbReference>
<dbReference type="DNASU" id="15270"/>
<dbReference type="Ensembl" id="ENSMUST00000052686.4">
    <property type="protein sequence ID" value="ENSMUSP00000051432.3"/>
    <property type="gene ID" value="ENSMUSG00000049932.4"/>
</dbReference>
<dbReference type="GeneID" id="15270"/>
<dbReference type="KEGG" id="mmu:15270"/>
<dbReference type="UCSC" id="uc009pcy.1">
    <property type="organism name" value="mouse"/>
</dbReference>
<dbReference type="AGR" id="MGI:102688"/>
<dbReference type="CTD" id="3014"/>
<dbReference type="MGI" id="MGI:102688">
    <property type="gene designation" value="H2ax"/>
</dbReference>
<dbReference type="VEuPathDB" id="HostDB:ENSMUSG00000049932"/>
<dbReference type="eggNOG" id="KOG1756">
    <property type="taxonomic scope" value="Eukaryota"/>
</dbReference>
<dbReference type="GeneTree" id="ENSGT01020000230360"/>
<dbReference type="HOGENOM" id="CLU_062828_3_1_1"/>
<dbReference type="InParanoid" id="P27661"/>
<dbReference type="OMA" id="HKKTRIN"/>
<dbReference type="OrthoDB" id="9421954at2759"/>
<dbReference type="PhylomeDB" id="P27661"/>
<dbReference type="TreeFam" id="TF300137"/>
<dbReference type="Reactome" id="R-MMU-110330">
    <property type="pathway name" value="Recognition and association of DNA glycosylase with site containing an affected purine"/>
</dbReference>
<dbReference type="Reactome" id="R-MMU-110331">
    <property type="pathway name" value="Cleavage of the damaged purine"/>
</dbReference>
<dbReference type="Reactome" id="R-MMU-212300">
    <property type="pathway name" value="PRC2 methylates histones and DNA"/>
</dbReference>
<dbReference type="Reactome" id="R-MMU-2299718">
    <property type="pathway name" value="Condensation of Prophase Chromosomes"/>
</dbReference>
<dbReference type="Reactome" id="R-MMU-2559586">
    <property type="pathway name" value="DNA Damage/Telomere Stress Induced Senescence"/>
</dbReference>
<dbReference type="Reactome" id="R-MMU-5693565">
    <property type="pathway name" value="Recruitment and ATM-mediated phosphorylation of repair and signaling proteins at DNA double strand breaks"/>
</dbReference>
<dbReference type="Reactome" id="R-MMU-5693571">
    <property type="pathway name" value="Nonhomologous End-Joining (NHEJ)"/>
</dbReference>
<dbReference type="Reactome" id="R-MMU-5693607">
    <property type="pathway name" value="Processing of DNA double-strand break ends"/>
</dbReference>
<dbReference type="Reactome" id="R-MMU-606279">
    <property type="pathway name" value="Deposition of new CENPA-containing nucleosomes at the centromere"/>
</dbReference>
<dbReference type="Reactome" id="R-MMU-69473">
    <property type="pathway name" value="G2/M DNA damage checkpoint"/>
</dbReference>
<dbReference type="Reactome" id="R-MMU-8936459">
    <property type="pathway name" value="RUNX1 regulates genes involved in megakaryocyte differentiation and platelet function"/>
</dbReference>
<dbReference type="Reactome" id="R-MMU-9670095">
    <property type="pathway name" value="Inhibition of DNA recombination at telomere"/>
</dbReference>
<dbReference type="Reactome" id="R-MMU-9841922">
    <property type="pathway name" value="MLL4 and MLL3 complexes regulate expression of PPARG target genes in adipogenesis and hepatic steatosis"/>
</dbReference>
<dbReference type="Reactome" id="R-MMU-9843940">
    <property type="pathway name" value="Regulation of endogenous retroelements by KRAB-ZFP proteins"/>
</dbReference>
<dbReference type="BioGRID-ORCS" id="15270">
    <property type="hits" value="12 hits in 116 CRISPR screens"/>
</dbReference>
<dbReference type="ChiTaRS" id="H2afx">
    <property type="organism name" value="mouse"/>
</dbReference>
<dbReference type="PRO" id="PR:P27661"/>
<dbReference type="Proteomes" id="UP000000589">
    <property type="component" value="Chromosome 9"/>
</dbReference>
<dbReference type="RNAct" id="P27661">
    <property type="molecule type" value="protein"/>
</dbReference>
<dbReference type="Bgee" id="ENSMUSG00000049932">
    <property type="expression patterns" value="Expressed in medial ganglionic eminence and 262 other cell types or tissues"/>
</dbReference>
<dbReference type="GO" id="GO:0005813">
    <property type="term" value="C:centrosome"/>
    <property type="evidence" value="ECO:0000250"/>
    <property type="project" value="UniProtKB"/>
</dbReference>
<dbReference type="GO" id="GO:0000785">
    <property type="term" value="C:chromatin"/>
    <property type="evidence" value="ECO:0000314"/>
    <property type="project" value="MGI"/>
</dbReference>
<dbReference type="GO" id="GO:0005694">
    <property type="term" value="C:chromosome"/>
    <property type="evidence" value="ECO:0000314"/>
    <property type="project" value="UniProtKB"/>
</dbReference>
<dbReference type="GO" id="GO:0000781">
    <property type="term" value="C:chromosome, telomeric region"/>
    <property type="evidence" value="ECO:0007669"/>
    <property type="project" value="Ensembl"/>
</dbReference>
<dbReference type="GO" id="GO:0000794">
    <property type="term" value="C:condensed nuclear chromosome"/>
    <property type="evidence" value="ECO:0000314"/>
    <property type="project" value="MGI"/>
</dbReference>
<dbReference type="GO" id="GO:0001673">
    <property type="term" value="C:male germ cell nucleus"/>
    <property type="evidence" value="ECO:0000314"/>
    <property type="project" value="MGI"/>
</dbReference>
<dbReference type="GO" id="GO:0016607">
    <property type="term" value="C:nuclear speck"/>
    <property type="evidence" value="ECO:0007669"/>
    <property type="project" value="Ensembl"/>
</dbReference>
<dbReference type="GO" id="GO:0005654">
    <property type="term" value="C:nucleoplasm"/>
    <property type="evidence" value="ECO:0000304"/>
    <property type="project" value="Reactome"/>
</dbReference>
<dbReference type="GO" id="GO:0000786">
    <property type="term" value="C:nucleosome"/>
    <property type="evidence" value="ECO:0007669"/>
    <property type="project" value="UniProtKB-KW"/>
</dbReference>
<dbReference type="GO" id="GO:0005634">
    <property type="term" value="C:nucleus"/>
    <property type="evidence" value="ECO:0000314"/>
    <property type="project" value="UniProtKB"/>
</dbReference>
<dbReference type="GO" id="GO:0005657">
    <property type="term" value="C:replication fork"/>
    <property type="evidence" value="ECO:0000314"/>
    <property type="project" value="MGI"/>
</dbReference>
<dbReference type="GO" id="GO:0090734">
    <property type="term" value="C:site of DNA damage"/>
    <property type="evidence" value="ECO:0000250"/>
    <property type="project" value="UniProtKB"/>
</dbReference>
<dbReference type="GO" id="GO:0035861">
    <property type="term" value="C:site of double-strand break"/>
    <property type="evidence" value="ECO:0000314"/>
    <property type="project" value="MGI"/>
</dbReference>
<dbReference type="GO" id="GO:0001741">
    <property type="term" value="C:XY body"/>
    <property type="evidence" value="ECO:0000314"/>
    <property type="project" value="MGI"/>
</dbReference>
<dbReference type="GO" id="GO:0140463">
    <property type="term" value="F:chromatin-protein adaptor activity"/>
    <property type="evidence" value="ECO:0007669"/>
    <property type="project" value="Ensembl"/>
</dbReference>
<dbReference type="GO" id="GO:0003684">
    <property type="term" value="F:damaged DNA binding"/>
    <property type="evidence" value="ECO:0000314"/>
    <property type="project" value="MGI"/>
</dbReference>
<dbReference type="GO" id="GO:0019899">
    <property type="term" value="F:enzyme binding"/>
    <property type="evidence" value="ECO:0007669"/>
    <property type="project" value="Ensembl"/>
</dbReference>
<dbReference type="GO" id="GO:0042393">
    <property type="term" value="F:histone binding"/>
    <property type="evidence" value="ECO:0007669"/>
    <property type="project" value="Ensembl"/>
</dbReference>
<dbReference type="GO" id="GO:0046982">
    <property type="term" value="F:protein heterodimerization activity"/>
    <property type="evidence" value="ECO:0007669"/>
    <property type="project" value="InterPro"/>
</dbReference>
<dbReference type="GO" id="GO:0030527">
    <property type="term" value="F:structural constituent of chromatin"/>
    <property type="evidence" value="ECO:0007669"/>
    <property type="project" value="InterPro"/>
</dbReference>
<dbReference type="GO" id="GO:0006974">
    <property type="term" value="P:DNA damage response"/>
    <property type="evidence" value="ECO:0000250"/>
    <property type="project" value="UniProtKB"/>
</dbReference>
<dbReference type="GO" id="GO:0006281">
    <property type="term" value="P:DNA repair"/>
    <property type="evidence" value="ECO:0000314"/>
    <property type="project" value="MGI"/>
</dbReference>
<dbReference type="GO" id="GO:0000724">
    <property type="term" value="P:double-strand break repair via homologous recombination"/>
    <property type="evidence" value="ECO:0000315"/>
    <property type="project" value="MGI"/>
</dbReference>
<dbReference type="GO" id="GO:0051321">
    <property type="term" value="P:meiotic cell cycle"/>
    <property type="evidence" value="ECO:0007669"/>
    <property type="project" value="UniProtKB-KW"/>
</dbReference>
<dbReference type="GO" id="GO:1990166">
    <property type="term" value="P:protein localization to site of double-strand break"/>
    <property type="evidence" value="ECO:0007669"/>
    <property type="project" value="Ensembl"/>
</dbReference>
<dbReference type="GO" id="GO:0007283">
    <property type="term" value="P:spermatogenesis"/>
    <property type="evidence" value="ECO:0000315"/>
    <property type="project" value="MGI"/>
</dbReference>
<dbReference type="CDD" id="cd00074">
    <property type="entry name" value="HFD_H2A"/>
    <property type="match status" value="1"/>
</dbReference>
<dbReference type="FunFam" id="1.10.20.10:FF:000004">
    <property type="entry name" value="Histone H2A"/>
    <property type="match status" value="1"/>
</dbReference>
<dbReference type="Gene3D" id="1.10.20.10">
    <property type="entry name" value="Histone, subunit A"/>
    <property type="match status" value="1"/>
</dbReference>
<dbReference type="InterPro" id="IPR009072">
    <property type="entry name" value="Histone-fold"/>
</dbReference>
<dbReference type="InterPro" id="IPR002119">
    <property type="entry name" value="Histone_H2A"/>
</dbReference>
<dbReference type="InterPro" id="IPR007125">
    <property type="entry name" value="Histone_H2A/H2B/H3"/>
</dbReference>
<dbReference type="InterPro" id="IPR032454">
    <property type="entry name" value="Histone_H2A_C"/>
</dbReference>
<dbReference type="InterPro" id="IPR032458">
    <property type="entry name" value="Histone_H2A_CS"/>
</dbReference>
<dbReference type="PANTHER" id="PTHR23430">
    <property type="entry name" value="HISTONE H2A"/>
    <property type="match status" value="1"/>
</dbReference>
<dbReference type="Pfam" id="PF00125">
    <property type="entry name" value="Histone"/>
    <property type="match status" value="1"/>
</dbReference>
<dbReference type="Pfam" id="PF16211">
    <property type="entry name" value="Histone_H2A_C"/>
    <property type="match status" value="1"/>
</dbReference>
<dbReference type="PRINTS" id="PR00620">
    <property type="entry name" value="HISTONEH2A"/>
</dbReference>
<dbReference type="SMART" id="SM00414">
    <property type="entry name" value="H2A"/>
    <property type="match status" value="1"/>
</dbReference>
<dbReference type="SUPFAM" id="SSF47113">
    <property type="entry name" value="Histone-fold"/>
    <property type="match status" value="1"/>
</dbReference>
<dbReference type="PROSITE" id="PS00046">
    <property type="entry name" value="HISTONE_H2A"/>
    <property type="match status" value="1"/>
</dbReference>
<proteinExistence type="evidence at protein level"/>
<keyword id="KW-0007">Acetylation</keyword>
<keyword id="KW-0131">Cell cycle</keyword>
<keyword id="KW-0158">Chromosome</keyword>
<keyword id="KW-0227">DNA damage</keyword>
<keyword id="KW-0233">DNA recombination</keyword>
<keyword id="KW-0234">DNA repair</keyword>
<keyword id="KW-0238">DNA-binding</keyword>
<keyword id="KW-1017">Isopeptide bond</keyword>
<keyword id="KW-0469">Meiosis</keyword>
<keyword id="KW-0544">Nucleosome core</keyword>
<keyword id="KW-0539">Nucleus</keyword>
<keyword id="KW-0597">Phosphoprotein</keyword>
<keyword id="KW-1185">Reference proteome</keyword>
<keyword id="KW-0832">Ubl conjugation</keyword>